<accession>Q95NE0</accession>
<reference key="1">
    <citation type="submission" date="2001-05" db="EMBL/GenBank/DDBJ databases">
        <title>Pan troglodytes Dombrock glycoprotein (DO) gene exon 3.</title>
        <authorList>
            <person name="Rios M."/>
            <person name="Reid M."/>
        </authorList>
    </citation>
    <scope>NUCLEOTIDE SEQUENCE [GENOMIC DNA]</scope>
</reference>
<gene>
    <name type="primary">ART4</name>
    <name type="synonym">DO</name>
</gene>
<feature type="signal peptide" evidence="2">
    <location>
        <begin position="1"/>
        <end position="46"/>
    </location>
</feature>
<feature type="chain" id="PRO_0000019331" description="Ecto-ADP-ribosyltransferase 4">
    <location>
        <begin position="47"/>
        <end position="285"/>
    </location>
</feature>
<feature type="propeptide" id="PRO_0000019332" description="Removed in mature form" evidence="2">
    <location>
        <begin position="286"/>
        <end position="314"/>
    </location>
</feature>
<feature type="domain" description="TR mART core" evidence="3">
    <location>
        <begin position="91"/>
        <end position="276"/>
    </location>
</feature>
<feature type="binding site" evidence="1">
    <location>
        <position position="126"/>
    </location>
    <ligand>
        <name>NAD(+)</name>
        <dbReference type="ChEBI" id="CHEBI:57540"/>
    </ligand>
</feature>
<feature type="binding site" evidence="1">
    <location>
        <position position="206"/>
    </location>
    <ligand>
        <name>NAD(+)</name>
        <dbReference type="ChEBI" id="CHEBI:57540"/>
    </ligand>
</feature>
<feature type="binding site" evidence="1">
    <location>
        <position position="240"/>
    </location>
    <ligand>
        <name>NAD(+)</name>
        <dbReference type="ChEBI" id="CHEBI:57540"/>
    </ligand>
</feature>
<feature type="lipid moiety-binding region" description="GPI-anchor amidated alanine" evidence="2">
    <location>
        <position position="285"/>
    </location>
</feature>
<feature type="glycosylation site" description="N-linked (GlcNAc...) asparagine" evidence="2">
    <location>
        <position position="114"/>
    </location>
</feature>
<feature type="glycosylation site" description="N-linked (GlcNAc...) asparagine" evidence="2">
    <location>
        <position position="178"/>
    </location>
</feature>
<feature type="glycosylation site" description="N-linked (GlcNAc...) asparagine" evidence="2">
    <location>
        <position position="222"/>
    </location>
</feature>
<feature type="glycosylation site" description="N-linked (GlcNAc...) asparagine" evidence="2">
    <location>
        <position position="257"/>
    </location>
</feature>
<feature type="glycosylation site" description="N-linked (GlcNAc...) asparagine" evidence="2">
    <location>
        <position position="274"/>
    </location>
</feature>
<feature type="disulfide bond" evidence="1">
    <location>
        <begin position="69"/>
        <end position="280"/>
    </location>
</feature>
<feature type="disulfide bond" evidence="1">
    <location>
        <begin position="182"/>
        <end position="231"/>
    </location>
</feature>
<comment type="catalytic activity">
    <reaction>
        <text>L-arginyl-[protein] + NAD(+) = N(omega)-(ADP-D-ribosyl)-L-arginyl-[protein] + nicotinamide + H(+)</text>
        <dbReference type="Rhea" id="RHEA:19149"/>
        <dbReference type="Rhea" id="RHEA-COMP:10532"/>
        <dbReference type="Rhea" id="RHEA-COMP:15087"/>
        <dbReference type="ChEBI" id="CHEBI:15378"/>
        <dbReference type="ChEBI" id="CHEBI:17154"/>
        <dbReference type="ChEBI" id="CHEBI:29965"/>
        <dbReference type="ChEBI" id="CHEBI:57540"/>
        <dbReference type="ChEBI" id="CHEBI:142554"/>
        <dbReference type="EC" id="2.4.2.31"/>
    </reaction>
</comment>
<comment type="subcellular location">
    <subcellularLocation>
        <location evidence="1">Cell membrane</location>
        <topology evidence="1">Lipid-anchor</topology>
        <topology evidence="1">GPI-anchor</topology>
    </subcellularLocation>
</comment>
<comment type="similarity">
    <text evidence="4">Belongs to the Arg-specific ADP-ribosyltransferase family.</text>
</comment>
<dbReference type="EC" id="2.4.2.31"/>
<dbReference type="EMBL" id="AF373017">
    <property type="protein sequence ID" value="AAK53821.1"/>
    <property type="molecule type" value="Genomic_DNA"/>
</dbReference>
<dbReference type="EMBL" id="AF373016">
    <property type="protein sequence ID" value="AAK53821.1"/>
    <property type="status" value="JOINED"/>
    <property type="molecule type" value="Genomic_DNA"/>
</dbReference>
<dbReference type="EMBL" id="AF374727">
    <property type="protein sequence ID" value="AAK53821.1"/>
    <property type="status" value="JOINED"/>
    <property type="molecule type" value="Genomic_DNA"/>
</dbReference>
<dbReference type="SMR" id="Q95NE0"/>
<dbReference type="FunCoup" id="Q95NE0">
    <property type="interactions" value="139"/>
</dbReference>
<dbReference type="GlyCosmos" id="Q95NE0">
    <property type="glycosylation" value="5 sites, No reported glycans"/>
</dbReference>
<dbReference type="PaxDb" id="9598-ENSPTRP00000054683"/>
<dbReference type="eggNOG" id="ENOG502SKQR">
    <property type="taxonomic scope" value="Eukaryota"/>
</dbReference>
<dbReference type="InParanoid" id="Q95NE0"/>
<dbReference type="Proteomes" id="UP000002277">
    <property type="component" value="Unplaced"/>
</dbReference>
<dbReference type="GO" id="GO:0005886">
    <property type="term" value="C:plasma membrane"/>
    <property type="evidence" value="ECO:0007669"/>
    <property type="project" value="UniProtKB-SubCell"/>
</dbReference>
<dbReference type="GO" id="GO:0098552">
    <property type="term" value="C:side of membrane"/>
    <property type="evidence" value="ECO:0007669"/>
    <property type="project" value="UniProtKB-KW"/>
</dbReference>
<dbReference type="GO" id="GO:0003950">
    <property type="term" value="F:NAD+ poly-ADP-ribosyltransferase activity"/>
    <property type="evidence" value="ECO:0000318"/>
    <property type="project" value="GO_Central"/>
</dbReference>
<dbReference type="GO" id="GO:0106274">
    <property type="term" value="F:NAD+-protein-arginine ADP-ribosyltransferase activity"/>
    <property type="evidence" value="ECO:0007669"/>
    <property type="project" value="UniProtKB-EC"/>
</dbReference>
<dbReference type="GO" id="GO:0016779">
    <property type="term" value="F:nucleotidyltransferase activity"/>
    <property type="evidence" value="ECO:0007669"/>
    <property type="project" value="UniProtKB-KW"/>
</dbReference>
<dbReference type="FunFam" id="3.90.176.10:FF:000001">
    <property type="entry name" value="NAD(P)(+)--arginine ADP-ribosyltransferase"/>
    <property type="match status" value="1"/>
</dbReference>
<dbReference type="Gene3D" id="3.90.176.10">
    <property type="entry name" value="Toxin ADP-ribosyltransferase, Chain A, domain 1"/>
    <property type="match status" value="1"/>
</dbReference>
<dbReference type="InterPro" id="IPR050999">
    <property type="entry name" value="ADP-ribosyltransferase_ARG"/>
</dbReference>
<dbReference type="InterPro" id="IPR000768">
    <property type="entry name" value="ART"/>
</dbReference>
<dbReference type="PANTHER" id="PTHR10339">
    <property type="entry name" value="ADP-RIBOSYLTRANSFERASE"/>
    <property type="match status" value="1"/>
</dbReference>
<dbReference type="PANTHER" id="PTHR10339:SF1">
    <property type="entry name" value="ECTO-ADP-RIBOSYLTRANSFERASE 4"/>
    <property type="match status" value="1"/>
</dbReference>
<dbReference type="Pfam" id="PF01129">
    <property type="entry name" value="ART"/>
    <property type="match status" value="1"/>
</dbReference>
<dbReference type="PRINTS" id="PR00970">
    <property type="entry name" value="RIBTRNSFRASE"/>
</dbReference>
<dbReference type="SUPFAM" id="SSF56399">
    <property type="entry name" value="ADP-ribosylation"/>
    <property type="match status" value="1"/>
</dbReference>
<dbReference type="PROSITE" id="PS01291">
    <property type="entry name" value="ART"/>
    <property type="match status" value="1"/>
</dbReference>
<dbReference type="PROSITE" id="PS51996">
    <property type="entry name" value="TR_MART"/>
    <property type="match status" value="1"/>
</dbReference>
<name>NAR4_PANTR</name>
<organism>
    <name type="scientific">Pan troglodytes</name>
    <name type="common">Chimpanzee</name>
    <dbReference type="NCBI Taxonomy" id="9598"/>
    <lineage>
        <taxon>Eukaryota</taxon>
        <taxon>Metazoa</taxon>
        <taxon>Chordata</taxon>
        <taxon>Craniata</taxon>
        <taxon>Vertebrata</taxon>
        <taxon>Euteleostomi</taxon>
        <taxon>Mammalia</taxon>
        <taxon>Eutheria</taxon>
        <taxon>Euarchontoglires</taxon>
        <taxon>Primates</taxon>
        <taxon>Haplorrhini</taxon>
        <taxon>Catarrhini</taxon>
        <taxon>Hominidae</taxon>
        <taxon>Pan</taxon>
    </lineage>
</organism>
<protein>
    <recommendedName>
        <fullName>Ecto-ADP-ribosyltransferase 4</fullName>
        <ecNumber>2.4.2.31</ecNumber>
    </recommendedName>
    <alternativeName>
        <fullName>ADP-ribosyltransferase C2 and C3 toxin-like 4</fullName>
        <shortName>ARTC4</shortName>
    </alternativeName>
    <alternativeName>
        <fullName>Dombrock molecule 1</fullName>
    </alternativeName>
    <alternativeName>
        <fullName>Mono(ADP-ribosyl)transferase 4</fullName>
    </alternativeName>
    <alternativeName>
        <fullName>NAD(P)(+)--arginine ADP-ribosyltransferase 4</fullName>
    </alternativeName>
    <cdAntigenName>CD297</cdAntigenName>
</protein>
<evidence type="ECO:0000250" key="1"/>
<evidence type="ECO:0000255" key="2"/>
<evidence type="ECO:0000255" key="3">
    <source>
        <dbReference type="PROSITE-ProRule" id="PRU01340"/>
    </source>
</evidence>
<evidence type="ECO:0000305" key="4"/>
<proteinExistence type="inferred from homology"/>
<sequence length="314" mass="35862">MGPLINRCKKILLPTTVPPATMRIWLLGGPLPFLLLLSGLQRPTEGSEVAIKIDFDFAPGSFDDQYQGCSKQVMEKLTQGDYFTKDIEAQKNYFRMWQKAHLAWLNQGKVLPQNMTTTHAVAILFYTLNSNVHSDFTRAMASVARTPQQYERSFHFKYLHYYLTSAIQLLRKDSIMENGTLCYEVHYRTKDVHFNAYTGATIRFGQFLSTSLLKEEAQEFGNQTLFTIFTCLGAPVQYFSLKKEVLIPPYELFKVINMSYHPRGNWLQLRSTGNLSTYNCQLLKASSKKCIPDPIAIASLSFLTSVIIFSKSRV</sequence>
<keyword id="KW-1003">Cell membrane</keyword>
<keyword id="KW-1015">Disulfide bond</keyword>
<keyword id="KW-0325">Glycoprotein</keyword>
<keyword id="KW-0328">Glycosyltransferase</keyword>
<keyword id="KW-0336">GPI-anchor</keyword>
<keyword id="KW-0449">Lipoprotein</keyword>
<keyword id="KW-0472">Membrane</keyword>
<keyword id="KW-0520">NAD</keyword>
<keyword id="KW-0521">NADP</keyword>
<keyword id="KW-0548">Nucleotidyltransferase</keyword>
<keyword id="KW-1185">Reference proteome</keyword>
<keyword id="KW-0732">Signal</keyword>
<keyword id="KW-0808">Transferase</keyword>